<keyword id="KW-0119">Carbohydrate metabolism</keyword>
<keyword id="KW-0413">Isomerase</keyword>
<keyword id="KW-0521">NADP</keyword>
<name>HLDD_HYDCU</name>
<reference key="1">
    <citation type="journal article" date="2006" name="PLoS Biol.">
        <title>The genome of deep-sea vent chemolithoautotroph Thiomicrospira crunogena XCL-2.</title>
        <authorList>
            <person name="Scott K.M."/>
            <person name="Sievert S.M."/>
            <person name="Abril F.N."/>
            <person name="Ball L.A."/>
            <person name="Barrett C.J."/>
            <person name="Blake R.A."/>
            <person name="Boller A.J."/>
            <person name="Chain P.S.G."/>
            <person name="Clark J.A."/>
            <person name="Davis C.R."/>
            <person name="Detter C."/>
            <person name="Do K.F."/>
            <person name="Dobrinski K.P."/>
            <person name="Faza B.I."/>
            <person name="Fitzpatrick K.A."/>
            <person name="Freyermuth S.K."/>
            <person name="Harmer T.L."/>
            <person name="Hauser L.J."/>
            <person name="Huegler M."/>
            <person name="Kerfeld C.A."/>
            <person name="Klotz M.G."/>
            <person name="Kong W.W."/>
            <person name="Land M."/>
            <person name="Lapidus A."/>
            <person name="Larimer F.W."/>
            <person name="Longo D.L."/>
            <person name="Lucas S."/>
            <person name="Malfatti S.A."/>
            <person name="Massey S.E."/>
            <person name="Martin D.D."/>
            <person name="McCuddin Z."/>
            <person name="Meyer F."/>
            <person name="Moore J.L."/>
            <person name="Ocampo L.H. Jr."/>
            <person name="Paul J.H."/>
            <person name="Paulsen I.T."/>
            <person name="Reep D.K."/>
            <person name="Ren Q."/>
            <person name="Ross R.L."/>
            <person name="Sato P.Y."/>
            <person name="Thomas P."/>
            <person name="Tinkham L.E."/>
            <person name="Zeruth G.T."/>
        </authorList>
    </citation>
    <scope>NUCLEOTIDE SEQUENCE [LARGE SCALE GENOMIC DNA]</scope>
    <source>
        <strain>DSM 25203 / XCL-2</strain>
    </source>
</reference>
<comment type="function">
    <text evidence="1">Catalyzes the interconversion between ADP-D-glycero-beta-D-manno-heptose and ADP-L-glycero-beta-D-manno-heptose via an epimerization at carbon 6 of the heptose.</text>
</comment>
<comment type="catalytic activity">
    <reaction evidence="1">
        <text>ADP-D-glycero-beta-D-manno-heptose = ADP-L-glycero-beta-D-manno-heptose</text>
        <dbReference type="Rhea" id="RHEA:17577"/>
        <dbReference type="ChEBI" id="CHEBI:59967"/>
        <dbReference type="ChEBI" id="CHEBI:61506"/>
        <dbReference type="EC" id="5.1.3.20"/>
    </reaction>
</comment>
<comment type="cofactor">
    <cofactor evidence="1">
        <name>NADP(+)</name>
        <dbReference type="ChEBI" id="CHEBI:58349"/>
    </cofactor>
    <text evidence="1">Binds 1 NADP(+) per subunit.</text>
</comment>
<comment type="pathway">
    <text evidence="1">Nucleotide-sugar biosynthesis; ADP-L-glycero-beta-D-manno-heptose biosynthesis; ADP-L-glycero-beta-D-manno-heptose from D-glycero-beta-D-manno-heptose 7-phosphate: step 4/4.</text>
</comment>
<comment type="subunit">
    <text evidence="1">Homopentamer.</text>
</comment>
<comment type="domain">
    <text evidence="1">Contains a large N-terminal NADP-binding domain, and a smaller C-terminal substrate-binding domain.</text>
</comment>
<comment type="similarity">
    <text evidence="1">Belongs to the NAD(P)-dependent epimerase/dehydratase family. HldD subfamily.</text>
</comment>
<protein>
    <recommendedName>
        <fullName evidence="1">ADP-L-glycero-D-manno-heptose-6-epimerase</fullName>
        <ecNumber evidence="1">5.1.3.20</ecNumber>
    </recommendedName>
    <alternativeName>
        <fullName evidence="1">ADP-L-glycero-beta-D-manno-heptose-6-epimerase</fullName>
        <shortName evidence="1">ADP-glyceromanno-heptose 6-epimerase</shortName>
        <shortName evidence="1">ADP-hep 6-epimerase</shortName>
        <shortName evidence="1">AGME</shortName>
    </alternativeName>
</protein>
<proteinExistence type="inferred from homology"/>
<gene>
    <name evidence="1" type="primary">hldD</name>
    <name type="ordered locus">Tcr_1517</name>
</gene>
<dbReference type="EC" id="5.1.3.20" evidence="1"/>
<dbReference type="EMBL" id="CP000109">
    <property type="protein sequence ID" value="ABB42109.1"/>
    <property type="molecule type" value="Genomic_DNA"/>
</dbReference>
<dbReference type="SMR" id="Q31FG4"/>
<dbReference type="STRING" id="317025.Tcr_1517"/>
<dbReference type="KEGG" id="tcx:Tcr_1517"/>
<dbReference type="eggNOG" id="COG0451">
    <property type="taxonomic scope" value="Bacteria"/>
</dbReference>
<dbReference type="HOGENOM" id="CLU_007383_1_3_6"/>
<dbReference type="OrthoDB" id="9803010at2"/>
<dbReference type="UniPathway" id="UPA00356">
    <property type="reaction ID" value="UER00440"/>
</dbReference>
<dbReference type="GO" id="GO:0008712">
    <property type="term" value="F:ADP-glyceromanno-heptose 6-epimerase activity"/>
    <property type="evidence" value="ECO:0007669"/>
    <property type="project" value="UniProtKB-UniRule"/>
</dbReference>
<dbReference type="GO" id="GO:0050661">
    <property type="term" value="F:NADP binding"/>
    <property type="evidence" value="ECO:0007669"/>
    <property type="project" value="InterPro"/>
</dbReference>
<dbReference type="GO" id="GO:0097171">
    <property type="term" value="P:ADP-L-glycero-beta-D-manno-heptose biosynthetic process"/>
    <property type="evidence" value="ECO:0007669"/>
    <property type="project" value="UniProtKB-UniPathway"/>
</dbReference>
<dbReference type="GO" id="GO:0005975">
    <property type="term" value="P:carbohydrate metabolic process"/>
    <property type="evidence" value="ECO:0007669"/>
    <property type="project" value="UniProtKB-UniRule"/>
</dbReference>
<dbReference type="CDD" id="cd05248">
    <property type="entry name" value="ADP_GME_SDR_e"/>
    <property type="match status" value="1"/>
</dbReference>
<dbReference type="Gene3D" id="3.40.50.720">
    <property type="entry name" value="NAD(P)-binding Rossmann-like Domain"/>
    <property type="match status" value="1"/>
</dbReference>
<dbReference type="Gene3D" id="3.90.25.10">
    <property type="entry name" value="UDP-galactose 4-epimerase, domain 1"/>
    <property type="match status" value="1"/>
</dbReference>
<dbReference type="HAMAP" id="MF_01601">
    <property type="entry name" value="Heptose_epimerase"/>
    <property type="match status" value="1"/>
</dbReference>
<dbReference type="InterPro" id="IPR001509">
    <property type="entry name" value="Epimerase_deHydtase"/>
</dbReference>
<dbReference type="InterPro" id="IPR011912">
    <property type="entry name" value="Heptose_epim"/>
</dbReference>
<dbReference type="InterPro" id="IPR036291">
    <property type="entry name" value="NAD(P)-bd_dom_sf"/>
</dbReference>
<dbReference type="NCBIfam" id="TIGR02197">
    <property type="entry name" value="heptose_epim"/>
    <property type="match status" value="1"/>
</dbReference>
<dbReference type="NCBIfam" id="NF008360">
    <property type="entry name" value="PRK11150.1"/>
    <property type="match status" value="1"/>
</dbReference>
<dbReference type="PANTHER" id="PTHR43103:SF3">
    <property type="entry name" value="ADP-L-GLYCERO-D-MANNO-HEPTOSE-6-EPIMERASE"/>
    <property type="match status" value="1"/>
</dbReference>
<dbReference type="PANTHER" id="PTHR43103">
    <property type="entry name" value="NUCLEOSIDE-DIPHOSPHATE-SUGAR EPIMERASE"/>
    <property type="match status" value="1"/>
</dbReference>
<dbReference type="Pfam" id="PF01370">
    <property type="entry name" value="Epimerase"/>
    <property type="match status" value="1"/>
</dbReference>
<dbReference type="SUPFAM" id="SSF51735">
    <property type="entry name" value="NAD(P)-binding Rossmann-fold domains"/>
    <property type="match status" value="1"/>
</dbReference>
<feature type="chain" id="PRO_0000255747" description="ADP-L-glycero-D-manno-heptose-6-epimerase">
    <location>
        <begin position="1"/>
        <end position="323"/>
    </location>
</feature>
<feature type="active site" description="Proton acceptor" evidence="1">
    <location>
        <position position="139"/>
    </location>
</feature>
<feature type="active site" description="Proton acceptor" evidence="1">
    <location>
        <position position="177"/>
    </location>
</feature>
<feature type="binding site" evidence="1">
    <location>
        <begin position="10"/>
        <end position="11"/>
    </location>
    <ligand>
        <name>NADP(+)</name>
        <dbReference type="ChEBI" id="CHEBI:58349"/>
    </ligand>
</feature>
<feature type="binding site" evidence="1">
    <location>
        <begin position="31"/>
        <end position="32"/>
    </location>
    <ligand>
        <name>NADP(+)</name>
        <dbReference type="ChEBI" id="CHEBI:58349"/>
    </ligand>
</feature>
<feature type="binding site" evidence="1">
    <location>
        <position position="38"/>
    </location>
    <ligand>
        <name>NADP(+)</name>
        <dbReference type="ChEBI" id="CHEBI:58349"/>
    </ligand>
</feature>
<feature type="binding site" evidence="1">
    <location>
        <position position="53"/>
    </location>
    <ligand>
        <name>NADP(+)</name>
        <dbReference type="ChEBI" id="CHEBI:58349"/>
    </ligand>
</feature>
<feature type="binding site" evidence="1">
    <location>
        <begin position="75"/>
        <end position="79"/>
    </location>
    <ligand>
        <name>NADP(+)</name>
        <dbReference type="ChEBI" id="CHEBI:58349"/>
    </ligand>
</feature>
<feature type="binding site" evidence="1">
    <location>
        <position position="92"/>
    </location>
    <ligand>
        <name>NADP(+)</name>
        <dbReference type="ChEBI" id="CHEBI:58349"/>
    </ligand>
</feature>
<feature type="binding site" evidence="1">
    <location>
        <position position="143"/>
    </location>
    <ligand>
        <name>NADP(+)</name>
        <dbReference type="ChEBI" id="CHEBI:58349"/>
    </ligand>
</feature>
<feature type="binding site" evidence="1">
    <location>
        <position position="168"/>
    </location>
    <ligand>
        <name>substrate</name>
    </ligand>
</feature>
<feature type="binding site" evidence="1">
    <location>
        <position position="169"/>
    </location>
    <ligand>
        <name>NADP(+)</name>
        <dbReference type="ChEBI" id="CHEBI:58349"/>
    </ligand>
</feature>
<feature type="binding site" evidence="1">
    <location>
        <position position="177"/>
    </location>
    <ligand>
        <name>NADP(+)</name>
        <dbReference type="ChEBI" id="CHEBI:58349"/>
    </ligand>
</feature>
<feature type="binding site" evidence="1">
    <location>
        <position position="179"/>
    </location>
    <ligand>
        <name>substrate</name>
    </ligand>
</feature>
<feature type="binding site" evidence="1">
    <location>
        <position position="186"/>
    </location>
    <ligand>
        <name>substrate</name>
    </ligand>
</feature>
<feature type="binding site" evidence="1">
    <location>
        <begin position="200"/>
        <end position="203"/>
    </location>
    <ligand>
        <name>substrate</name>
    </ligand>
</feature>
<feature type="binding site" evidence="1">
    <location>
        <position position="213"/>
    </location>
    <ligand>
        <name>substrate</name>
    </ligand>
</feature>
<feature type="binding site" evidence="1">
    <location>
        <position position="277"/>
    </location>
    <ligand>
        <name>substrate</name>
    </ligand>
</feature>
<accession>Q31FG4</accession>
<organism>
    <name type="scientific">Hydrogenovibrio crunogenus (strain DSM 25203 / XCL-2)</name>
    <name type="common">Thiomicrospira crunogena</name>
    <dbReference type="NCBI Taxonomy" id="317025"/>
    <lineage>
        <taxon>Bacteria</taxon>
        <taxon>Pseudomonadati</taxon>
        <taxon>Pseudomonadota</taxon>
        <taxon>Gammaproteobacteria</taxon>
        <taxon>Thiotrichales</taxon>
        <taxon>Piscirickettsiaceae</taxon>
        <taxon>Hydrogenovibrio</taxon>
    </lineage>
</organism>
<sequence>MIVVTGGAGFIGSNIVKALNAQGRTDILVVDNLKNGKKFINIADCDIADYLDKEDFQSRIFAEEGLPDIDCVFHEGACSATTEWDGKYMMDNNYEYSKDLLNYCLNRKIPFLYASSAAVYGDGPTFIEERQYEKPLNVYGYSKFQFDQYVRRILPLAESQVAGFRYFNVYGPREQHKGDMASVAFKLHNQVLAGEKLKLFGAYDGYEAGMQTRDFVFIEDVVNVNLWFMENPEQSGIFNLGPAAAEPFKHIADAVIDFHGQGEIEYIPFPDRLKGAYQSFTQADNTRLRDAGYDKPFHTVSEGVQKYLRWLSDNPRVLDFTKK</sequence>
<evidence type="ECO:0000255" key="1">
    <source>
        <dbReference type="HAMAP-Rule" id="MF_01601"/>
    </source>
</evidence>